<protein>
    <recommendedName>
        <fullName evidence="1">Protein-export protein SecB</fullName>
    </recommendedName>
</protein>
<feature type="chain" id="PRO_1000062494" description="Protein-export protein SecB">
    <location>
        <begin position="1"/>
        <end position="161"/>
    </location>
</feature>
<reference key="1">
    <citation type="submission" date="2007-04" db="EMBL/GenBank/DDBJ databases">
        <title>Complete sequence of Pseudomonas mendocina ymp.</title>
        <authorList>
            <consortium name="US DOE Joint Genome Institute"/>
            <person name="Copeland A."/>
            <person name="Lucas S."/>
            <person name="Lapidus A."/>
            <person name="Barry K."/>
            <person name="Glavina del Rio T."/>
            <person name="Dalin E."/>
            <person name="Tice H."/>
            <person name="Pitluck S."/>
            <person name="Kiss H."/>
            <person name="Brettin T."/>
            <person name="Detter J.C."/>
            <person name="Bruce D."/>
            <person name="Han C."/>
            <person name="Schmutz J."/>
            <person name="Larimer F."/>
            <person name="Land M."/>
            <person name="Hauser L."/>
            <person name="Kyrpides N."/>
            <person name="Mikhailova N."/>
            <person name="Hersman L."/>
            <person name="Dubois J."/>
            <person name="Maurice P."/>
            <person name="Richardson P."/>
        </authorList>
    </citation>
    <scope>NUCLEOTIDE SEQUENCE [LARGE SCALE GENOMIC DNA]</scope>
    <source>
        <strain>ymp</strain>
    </source>
</reference>
<organism>
    <name type="scientific">Ectopseudomonas mendocina (strain ymp)</name>
    <name type="common">Pseudomonas mendocina</name>
    <dbReference type="NCBI Taxonomy" id="399739"/>
    <lineage>
        <taxon>Bacteria</taxon>
        <taxon>Pseudomonadati</taxon>
        <taxon>Pseudomonadota</taxon>
        <taxon>Gammaproteobacteria</taxon>
        <taxon>Pseudomonadales</taxon>
        <taxon>Pseudomonadaceae</taxon>
        <taxon>Ectopseudomonas</taxon>
    </lineage>
</organism>
<accession>A4Y074</accession>
<name>SECB_ECTM1</name>
<gene>
    <name evidence="1" type="primary">secB</name>
    <name type="ordered locus">Pmen_4243</name>
</gene>
<evidence type="ECO:0000255" key="1">
    <source>
        <dbReference type="HAMAP-Rule" id="MF_00821"/>
    </source>
</evidence>
<sequence>MTEQANSGAAAAESQNPQFSLQRIYVKDLSFEAPKSPEIFRQEWTPSVGLDLNTRQKTLEGDFHEVVLTLSVTVKNGEEVAFIAEVQQAGIFLIKGLDAASMSHTLGAFCPNILFPYAREALDSLVTRGSFPALMLSPVNFDALYAQELQRMQQAGEAAAH</sequence>
<dbReference type="EMBL" id="CP000680">
    <property type="protein sequence ID" value="ABP86990.1"/>
    <property type="molecule type" value="Genomic_DNA"/>
</dbReference>
<dbReference type="SMR" id="A4Y074"/>
<dbReference type="STRING" id="399739.Pmen_4243"/>
<dbReference type="KEGG" id="pmy:Pmen_4243"/>
<dbReference type="PATRIC" id="fig|399739.8.peg.4297"/>
<dbReference type="eggNOG" id="COG1952">
    <property type="taxonomic scope" value="Bacteria"/>
</dbReference>
<dbReference type="HOGENOM" id="CLU_111574_1_0_6"/>
<dbReference type="OrthoDB" id="9795145at2"/>
<dbReference type="GO" id="GO:0005737">
    <property type="term" value="C:cytoplasm"/>
    <property type="evidence" value="ECO:0007669"/>
    <property type="project" value="UniProtKB-SubCell"/>
</dbReference>
<dbReference type="GO" id="GO:0051082">
    <property type="term" value="F:unfolded protein binding"/>
    <property type="evidence" value="ECO:0007669"/>
    <property type="project" value="InterPro"/>
</dbReference>
<dbReference type="GO" id="GO:0006457">
    <property type="term" value="P:protein folding"/>
    <property type="evidence" value="ECO:0007669"/>
    <property type="project" value="UniProtKB-UniRule"/>
</dbReference>
<dbReference type="GO" id="GO:0051262">
    <property type="term" value="P:protein tetramerization"/>
    <property type="evidence" value="ECO:0007669"/>
    <property type="project" value="InterPro"/>
</dbReference>
<dbReference type="GO" id="GO:0015031">
    <property type="term" value="P:protein transport"/>
    <property type="evidence" value="ECO:0007669"/>
    <property type="project" value="UniProtKB-UniRule"/>
</dbReference>
<dbReference type="Gene3D" id="3.10.420.10">
    <property type="entry name" value="SecB-like"/>
    <property type="match status" value="1"/>
</dbReference>
<dbReference type="HAMAP" id="MF_00821">
    <property type="entry name" value="SecB"/>
    <property type="match status" value="1"/>
</dbReference>
<dbReference type="InterPro" id="IPR003708">
    <property type="entry name" value="SecB"/>
</dbReference>
<dbReference type="InterPro" id="IPR035958">
    <property type="entry name" value="SecB-like_sf"/>
</dbReference>
<dbReference type="NCBIfam" id="NF004393">
    <property type="entry name" value="PRK05751.1-4"/>
    <property type="match status" value="1"/>
</dbReference>
<dbReference type="NCBIfam" id="TIGR00809">
    <property type="entry name" value="secB"/>
    <property type="match status" value="1"/>
</dbReference>
<dbReference type="PANTHER" id="PTHR36918">
    <property type="match status" value="1"/>
</dbReference>
<dbReference type="PANTHER" id="PTHR36918:SF1">
    <property type="entry name" value="PROTEIN-EXPORT PROTEIN SECB"/>
    <property type="match status" value="1"/>
</dbReference>
<dbReference type="Pfam" id="PF02556">
    <property type="entry name" value="SecB"/>
    <property type="match status" value="1"/>
</dbReference>
<dbReference type="PRINTS" id="PR01594">
    <property type="entry name" value="SECBCHAPRONE"/>
</dbReference>
<dbReference type="SUPFAM" id="SSF54611">
    <property type="entry name" value="SecB-like"/>
    <property type="match status" value="1"/>
</dbReference>
<proteinExistence type="inferred from homology"/>
<comment type="function">
    <text evidence="1">One of the proteins required for the normal export of preproteins out of the cell cytoplasm. It is a molecular chaperone that binds to a subset of precursor proteins, maintaining them in a translocation-competent state. It also specifically binds to its receptor SecA.</text>
</comment>
<comment type="subunit">
    <text evidence="1">Homotetramer, a dimer of dimers. One homotetramer interacts with 1 SecA dimer.</text>
</comment>
<comment type="subcellular location">
    <subcellularLocation>
        <location evidence="1">Cytoplasm</location>
    </subcellularLocation>
</comment>
<comment type="similarity">
    <text evidence="1">Belongs to the SecB family.</text>
</comment>
<keyword id="KW-0143">Chaperone</keyword>
<keyword id="KW-0963">Cytoplasm</keyword>
<keyword id="KW-0653">Protein transport</keyword>
<keyword id="KW-0811">Translocation</keyword>
<keyword id="KW-0813">Transport</keyword>